<dbReference type="EC" id="3.6.4.-" evidence="1"/>
<dbReference type="EMBL" id="AM295007">
    <property type="protein sequence ID" value="CAM29377.1"/>
    <property type="molecule type" value="Genomic_DNA"/>
</dbReference>
<dbReference type="RefSeq" id="WP_002986679.1">
    <property type="nucleotide sequence ID" value="NC_009332.1"/>
</dbReference>
<dbReference type="SMR" id="A2RC05"/>
<dbReference type="GeneID" id="69900018"/>
<dbReference type="KEGG" id="spf:SpyM50035"/>
<dbReference type="HOGENOM" id="CLU_055599_1_0_9"/>
<dbReference type="GO" id="GO:0005737">
    <property type="term" value="C:cytoplasm"/>
    <property type="evidence" value="ECO:0007669"/>
    <property type="project" value="UniProtKB-SubCell"/>
</dbReference>
<dbReference type="GO" id="GO:0048476">
    <property type="term" value="C:Holliday junction resolvase complex"/>
    <property type="evidence" value="ECO:0007669"/>
    <property type="project" value="UniProtKB-UniRule"/>
</dbReference>
<dbReference type="GO" id="GO:0005524">
    <property type="term" value="F:ATP binding"/>
    <property type="evidence" value="ECO:0007669"/>
    <property type="project" value="UniProtKB-UniRule"/>
</dbReference>
<dbReference type="GO" id="GO:0016887">
    <property type="term" value="F:ATP hydrolysis activity"/>
    <property type="evidence" value="ECO:0007669"/>
    <property type="project" value="InterPro"/>
</dbReference>
<dbReference type="GO" id="GO:0000400">
    <property type="term" value="F:four-way junction DNA binding"/>
    <property type="evidence" value="ECO:0007669"/>
    <property type="project" value="UniProtKB-UniRule"/>
</dbReference>
<dbReference type="GO" id="GO:0009378">
    <property type="term" value="F:four-way junction helicase activity"/>
    <property type="evidence" value="ECO:0007669"/>
    <property type="project" value="InterPro"/>
</dbReference>
<dbReference type="GO" id="GO:0006310">
    <property type="term" value="P:DNA recombination"/>
    <property type="evidence" value="ECO:0007669"/>
    <property type="project" value="UniProtKB-UniRule"/>
</dbReference>
<dbReference type="GO" id="GO:0006281">
    <property type="term" value="P:DNA repair"/>
    <property type="evidence" value="ECO:0007669"/>
    <property type="project" value="UniProtKB-UniRule"/>
</dbReference>
<dbReference type="CDD" id="cd00009">
    <property type="entry name" value="AAA"/>
    <property type="match status" value="1"/>
</dbReference>
<dbReference type="Gene3D" id="1.10.8.60">
    <property type="match status" value="1"/>
</dbReference>
<dbReference type="Gene3D" id="3.40.50.300">
    <property type="entry name" value="P-loop containing nucleotide triphosphate hydrolases"/>
    <property type="match status" value="1"/>
</dbReference>
<dbReference type="Gene3D" id="1.10.10.10">
    <property type="entry name" value="Winged helix-like DNA-binding domain superfamily/Winged helix DNA-binding domain"/>
    <property type="match status" value="1"/>
</dbReference>
<dbReference type="HAMAP" id="MF_00016">
    <property type="entry name" value="DNA_HJ_migration_RuvB"/>
    <property type="match status" value="1"/>
</dbReference>
<dbReference type="InterPro" id="IPR003593">
    <property type="entry name" value="AAA+_ATPase"/>
</dbReference>
<dbReference type="InterPro" id="IPR041445">
    <property type="entry name" value="AAA_lid_4"/>
</dbReference>
<dbReference type="InterPro" id="IPR004605">
    <property type="entry name" value="DNA_helicase_Holl-junc_RuvB"/>
</dbReference>
<dbReference type="InterPro" id="IPR027417">
    <property type="entry name" value="P-loop_NTPase"/>
</dbReference>
<dbReference type="InterPro" id="IPR008824">
    <property type="entry name" value="RuvB-like_N"/>
</dbReference>
<dbReference type="InterPro" id="IPR008823">
    <property type="entry name" value="RuvB_C"/>
</dbReference>
<dbReference type="InterPro" id="IPR036388">
    <property type="entry name" value="WH-like_DNA-bd_sf"/>
</dbReference>
<dbReference type="InterPro" id="IPR036390">
    <property type="entry name" value="WH_DNA-bd_sf"/>
</dbReference>
<dbReference type="NCBIfam" id="NF000868">
    <property type="entry name" value="PRK00080.1"/>
    <property type="match status" value="1"/>
</dbReference>
<dbReference type="NCBIfam" id="TIGR00635">
    <property type="entry name" value="ruvB"/>
    <property type="match status" value="1"/>
</dbReference>
<dbReference type="PANTHER" id="PTHR42848">
    <property type="match status" value="1"/>
</dbReference>
<dbReference type="PANTHER" id="PTHR42848:SF1">
    <property type="entry name" value="HOLLIDAY JUNCTION BRANCH MIGRATION COMPLEX SUBUNIT RUVB"/>
    <property type="match status" value="1"/>
</dbReference>
<dbReference type="Pfam" id="PF17864">
    <property type="entry name" value="AAA_lid_4"/>
    <property type="match status" value="1"/>
</dbReference>
<dbReference type="Pfam" id="PF05491">
    <property type="entry name" value="RuvB_C"/>
    <property type="match status" value="1"/>
</dbReference>
<dbReference type="Pfam" id="PF05496">
    <property type="entry name" value="RuvB_N"/>
    <property type="match status" value="1"/>
</dbReference>
<dbReference type="SMART" id="SM00382">
    <property type="entry name" value="AAA"/>
    <property type="match status" value="1"/>
</dbReference>
<dbReference type="SUPFAM" id="SSF52540">
    <property type="entry name" value="P-loop containing nucleoside triphosphate hydrolases"/>
    <property type="match status" value="1"/>
</dbReference>
<dbReference type="SUPFAM" id="SSF46785">
    <property type="entry name" value="Winged helix' DNA-binding domain"/>
    <property type="match status" value="1"/>
</dbReference>
<protein>
    <recommendedName>
        <fullName evidence="1">Holliday junction branch migration complex subunit RuvB</fullName>
        <ecNumber evidence="1">3.6.4.-</ecNumber>
    </recommendedName>
</protein>
<proteinExistence type="inferred from homology"/>
<accession>A2RC05</accession>
<keyword id="KW-0067">ATP-binding</keyword>
<keyword id="KW-0963">Cytoplasm</keyword>
<keyword id="KW-0227">DNA damage</keyword>
<keyword id="KW-0233">DNA recombination</keyword>
<keyword id="KW-0234">DNA repair</keyword>
<keyword id="KW-0238">DNA-binding</keyword>
<keyword id="KW-0378">Hydrolase</keyword>
<keyword id="KW-0547">Nucleotide-binding</keyword>
<sequence>MARILDNNVMGNEEFSDRTLRPQYLHEYIGQDKVKEQFAIFIEAAKRRDESLDHVLLFGPPGLGKTTMAFVIANELGVNLKQTSGPAVEKAGDLVAILNELEPGDILFIDEIHRMPMSVEEVLYSAMEDFYIDIMIGAGDTSRSIHLDLPPFTLIGATTRAGMLSNPLRARFGITGHMEYYQEKDLTEIVERTATIFEIKIDHEAARKLACRSRGTPRIANRLLKRVRDYAQIIGDGIITAQITDRALTMLDVDREGLDYIDQKILRTMIEMYQGGPVGLGTLSVNIAEERNTVEEMYEPYLIQKGFLMRTRTGRVATQKAYRHLGYPYQNT</sequence>
<evidence type="ECO:0000255" key="1">
    <source>
        <dbReference type="HAMAP-Rule" id="MF_00016"/>
    </source>
</evidence>
<name>RUVB_STRPG</name>
<gene>
    <name evidence="1" type="primary">ruvB</name>
    <name type="ordered locus">SpyM50035</name>
</gene>
<organism>
    <name type="scientific">Streptococcus pyogenes serotype M5 (strain Manfredo)</name>
    <dbReference type="NCBI Taxonomy" id="160491"/>
    <lineage>
        <taxon>Bacteria</taxon>
        <taxon>Bacillati</taxon>
        <taxon>Bacillota</taxon>
        <taxon>Bacilli</taxon>
        <taxon>Lactobacillales</taxon>
        <taxon>Streptococcaceae</taxon>
        <taxon>Streptococcus</taxon>
    </lineage>
</organism>
<feature type="chain" id="PRO_1000001487" description="Holliday junction branch migration complex subunit RuvB">
    <location>
        <begin position="1"/>
        <end position="332"/>
    </location>
</feature>
<feature type="region of interest" description="Large ATPase domain (RuvB-L)" evidence="1">
    <location>
        <begin position="1"/>
        <end position="181"/>
    </location>
</feature>
<feature type="region of interest" description="Small ATPAse domain (RuvB-S)" evidence="1">
    <location>
        <begin position="182"/>
        <end position="252"/>
    </location>
</feature>
<feature type="region of interest" description="Head domain (RuvB-H)" evidence="1">
    <location>
        <begin position="255"/>
        <end position="332"/>
    </location>
</feature>
<feature type="binding site" evidence="1">
    <location>
        <position position="20"/>
    </location>
    <ligand>
        <name>ATP</name>
        <dbReference type="ChEBI" id="CHEBI:30616"/>
    </ligand>
</feature>
<feature type="binding site" evidence="1">
    <location>
        <position position="21"/>
    </location>
    <ligand>
        <name>ATP</name>
        <dbReference type="ChEBI" id="CHEBI:30616"/>
    </ligand>
</feature>
<feature type="binding site" evidence="1">
    <location>
        <position position="62"/>
    </location>
    <ligand>
        <name>ATP</name>
        <dbReference type="ChEBI" id="CHEBI:30616"/>
    </ligand>
</feature>
<feature type="binding site" evidence="1">
    <location>
        <position position="65"/>
    </location>
    <ligand>
        <name>ATP</name>
        <dbReference type="ChEBI" id="CHEBI:30616"/>
    </ligand>
</feature>
<feature type="binding site" evidence="1">
    <location>
        <position position="66"/>
    </location>
    <ligand>
        <name>ATP</name>
        <dbReference type="ChEBI" id="CHEBI:30616"/>
    </ligand>
</feature>
<feature type="binding site" evidence="1">
    <location>
        <position position="66"/>
    </location>
    <ligand>
        <name>Mg(2+)</name>
        <dbReference type="ChEBI" id="CHEBI:18420"/>
    </ligand>
</feature>
<feature type="binding site" evidence="1">
    <location>
        <position position="67"/>
    </location>
    <ligand>
        <name>ATP</name>
        <dbReference type="ChEBI" id="CHEBI:30616"/>
    </ligand>
</feature>
<feature type="binding site" evidence="1">
    <location>
        <begin position="128"/>
        <end position="130"/>
    </location>
    <ligand>
        <name>ATP</name>
        <dbReference type="ChEBI" id="CHEBI:30616"/>
    </ligand>
</feature>
<feature type="binding site" evidence="1">
    <location>
        <position position="171"/>
    </location>
    <ligand>
        <name>ATP</name>
        <dbReference type="ChEBI" id="CHEBI:30616"/>
    </ligand>
</feature>
<feature type="binding site" evidence="1">
    <location>
        <position position="181"/>
    </location>
    <ligand>
        <name>ATP</name>
        <dbReference type="ChEBI" id="CHEBI:30616"/>
    </ligand>
</feature>
<feature type="binding site" evidence="1">
    <location>
        <position position="218"/>
    </location>
    <ligand>
        <name>ATP</name>
        <dbReference type="ChEBI" id="CHEBI:30616"/>
    </ligand>
</feature>
<feature type="binding site" evidence="1">
    <location>
        <position position="291"/>
    </location>
    <ligand>
        <name>DNA</name>
        <dbReference type="ChEBI" id="CHEBI:16991"/>
    </ligand>
</feature>
<feature type="binding site" evidence="1">
    <location>
        <position position="310"/>
    </location>
    <ligand>
        <name>DNA</name>
        <dbReference type="ChEBI" id="CHEBI:16991"/>
    </ligand>
</feature>
<feature type="binding site" evidence="1">
    <location>
        <position position="312"/>
    </location>
    <ligand>
        <name>DNA</name>
        <dbReference type="ChEBI" id="CHEBI:16991"/>
    </ligand>
</feature>
<feature type="binding site" evidence="1">
    <location>
        <position position="315"/>
    </location>
    <ligand>
        <name>DNA</name>
        <dbReference type="ChEBI" id="CHEBI:16991"/>
    </ligand>
</feature>
<comment type="function">
    <text evidence="1">The RuvA-RuvB-RuvC complex processes Holliday junction (HJ) DNA during genetic recombination and DNA repair, while the RuvA-RuvB complex plays an important role in the rescue of blocked DNA replication forks via replication fork reversal (RFR). RuvA specifically binds to HJ cruciform DNA, conferring on it an open structure. The RuvB hexamer acts as an ATP-dependent pump, pulling dsDNA into and through the RuvAB complex. RuvB forms 2 homohexamers on either side of HJ DNA bound by 1 or 2 RuvA tetramers; 4 subunits per hexamer contact DNA at a time. Coordinated motions by a converter formed by DNA-disengaged RuvB subunits stimulates ATP hydrolysis and nucleotide exchange. Immobilization of the converter enables RuvB to convert the ATP-contained energy into a lever motion, pulling 2 nucleotides of DNA out of the RuvA tetramer per ATP hydrolyzed, thus driving DNA branch migration. The RuvB motors rotate together with the DNA substrate, which together with the progressing nucleotide cycle form the mechanistic basis for DNA recombination by continuous HJ branch migration. Branch migration allows RuvC to scan DNA until it finds its consensus sequence, where it cleaves and resolves cruciform DNA.</text>
</comment>
<comment type="catalytic activity">
    <reaction evidence="1">
        <text>ATP + H2O = ADP + phosphate + H(+)</text>
        <dbReference type="Rhea" id="RHEA:13065"/>
        <dbReference type="ChEBI" id="CHEBI:15377"/>
        <dbReference type="ChEBI" id="CHEBI:15378"/>
        <dbReference type="ChEBI" id="CHEBI:30616"/>
        <dbReference type="ChEBI" id="CHEBI:43474"/>
        <dbReference type="ChEBI" id="CHEBI:456216"/>
    </reaction>
</comment>
<comment type="subunit">
    <text evidence="1">Homohexamer. Forms an RuvA(8)-RuvB(12)-Holliday junction (HJ) complex. HJ DNA is sandwiched between 2 RuvA tetramers; dsDNA enters through RuvA and exits via RuvB. An RuvB hexamer assembles on each DNA strand where it exits the tetramer. Each RuvB hexamer is contacted by two RuvA subunits (via domain III) on 2 adjacent RuvB subunits; this complex drives branch migration. In the full resolvosome a probable DNA-RuvA(4)-RuvB(12)-RuvC(2) complex forms which resolves the HJ.</text>
</comment>
<comment type="subcellular location">
    <subcellularLocation>
        <location evidence="1">Cytoplasm</location>
    </subcellularLocation>
</comment>
<comment type="domain">
    <text evidence="1">Has 3 domains, the large (RuvB-L) and small ATPase (RuvB-S) domains and the C-terminal head (RuvB-H) domain. The head domain binds DNA, while the ATPase domains jointly bind ATP, ADP or are empty depending on the state of the subunit in the translocation cycle. During a single DNA translocation step the structure of each domain remains the same, but their relative positions change.</text>
</comment>
<comment type="similarity">
    <text evidence="1">Belongs to the RuvB family.</text>
</comment>
<reference key="1">
    <citation type="journal article" date="2007" name="J. Bacteriol.">
        <title>Complete genome of acute rheumatic fever-associated serotype M5 Streptococcus pyogenes strain Manfredo.</title>
        <authorList>
            <person name="Holden M.T.G."/>
            <person name="Scott A."/>
            <person name="Cherevach I."/>
            <person name="Chillingworth T."/>
            <person name="Churcher C."/>
            <person name="Cronin A."/>
            <person name="Dowd L."/>
            <person name="Feltwell T."/>
            <person name="Hamlin N."/>
            <person name="Holroyd S."/>
            <person name="Jagels K."/>
            <person name="Moule S."/>
            <person name="Mungall K."/>
            <person name="Quail M.A."/>
            <person name="Price C."/>
            <person name="Rabbinowitsch E."/>
            <person name="Sharp S."/>
            <person name="Skelton J."/>
            <person name="Whitehead S."/>
            <person name="Barrell B.G."/>
            <person name="Kehoe M."/>
            <person name="Parkhill J."/>
        </authorList>
    </citation>
    <scope>NUCLEOTIDE SEQUENCE [LARGE SCALE GENOMIC DNA]</scope>
    <source>
        <strain>Manfredo</strain>
    </source>
</reference>